<feature type="chain" id="PRO_1000096139" description="Elongation factor P">
    <location>
        <begin position="1"/>
        <end position="185"/>
    </location>
</feature>
<sequence>MISAGDLRKGTTFEQDGQVYVVVEFLHVKPGKGAAFVRTKLKNAITGAVTETTFNPTAKLQEAVIERKEMQYLYTDGELYYFMDQETFEQIPLNYDKVEEAIKFLKENMFATIKFFKGEAFSVEAPNFVELLISHTEPGAKGNTTSNVMKPATLETGATIQVPLFVNEGETIRVDTRTGEYMERV</sequence>
<dbReference type="EMBL" id="CP000939">
    <property type="protein sequence ID" value="ACA44802.1"/>
    <property type="molecule type" value="Genomic_DNA"/>
</dbReference>
<dbReference type="RefSeq" id="WP_003358905.1">
    <property type="nucleotide sequence ID" value="NC_010516.1"/>
</dbReference>
<dbReference type="SMR" id="B1IMQ0"/>
<dbReference type="GeneID" id="5186152"/>
<dbReference type="KEGG" id="cbb:CLD_2740"/>
<dbReference type="HOGENOM" id="CLU_074944_0_1_9"/>
<dbReference type="UniPathway" id="UPA00345"/>
<dbReference type="Proteomes" id="UP000008541">
    <property type="component" value="Chromosome"/>
</dbReference>
<dbReference type="GO" id="GO:0005737">
    <property type="term" value="C:cytoplasm"/>
    <property type="evidence" value="ECO:0007669"/>
    <property type="project" value="UniProtKB-SubCell"/>
</dbReference>
<dbReference type="GO" id="GO:0003746">
    <property type="term" value="F:translation elongation factor activity"/>
    <property type="evidence" value="ECO:0007669"/>
    <property type="project" value="UniProtKB-UniRule"/>
</dbReference>
<dbReference type="GO" id="GO:0043043">
    <property type="term" value="P:peptide biosynthetic process"/>
    <property type="evidence" value="ECO:0007669"/>
    <property type="project" value="InterPro"/>
</dbReference>
<dbReference type="CDD" id="cd04470">
    <property type="entry name" value="S1_EF-P_repeat_1"/>
    <property type="match status" value="1"/>
</dbReference>
<dbReference type="CDD" id="cd05794">
    <property type="entry name" value="S1_EF-P_repeat_2"/>
    <property type="match status" value="1"/>
</dbReference>
<dbReference type="FunFam" id="2.30.30.30:FF:000003">
    <property type="entry name" value="Elongation factor P"/>
    <property type="match status" value="1"/>
</dbReference>
<dbReference type="FunFam" id="2.40.50.140:FF:000004">
    <property type="entry name" value="Elongation factor P"/>
    <property type="match status" value="1"/>
</dbReference>
<dbReference type="FunFam" id="2.40.50.140:FF:000009">
    <property type="entry name" value="Elongation factor P"/>
    <property type="match status" value="1"/>
</dbReference>
<dbReference type="Gene3D" id="2.30.30.30">
    <property type="match status" value="1"/>
</dbReference>
<dbReference type="Gene3D" id="2.40.50.140">
    <property type="entry name" value="Nucleic acid-binding proteins"/>
    <property type="match status" value="2"/>
</dbReference>
<dbReference type="HAMAP" id="MF_00141">
    <property type="entry name" value="EF_P"/>
    <property type="match status" value="1"/>
</dbReference>
<dbReference type="InterPro" id="IPR015365">
    <property type="entry name" value="Elong-fact-P_C"/>
</dbReference>
<dbReference type="InterPro" id="IPR012340">
    <property type="entry name" value="NA-bd_OB-fold"/>
</dbReference>
<dbReference type="InterPro" id="IPR014722">
    <property type="entry name" value="Rib_uL2_dom2"/>
</dbReference>
<dbReference type="InterPro" id="IPR020599">
    <property type="entry name" value="Transl_elong_fac_P/YeiP"/>
</dbReference>
<dbReference type="InterPro" id="IPR013185">
    <property type="entry name" value="Transl_elong_KOW-like"/>
</dbReference>
<dbReference type="InterPro" id="IPR001059">
    <property type="entry name" value="Transl_elong_P/YeiP_cen"/>
</dbReference>
<dbReference type="InterPro" id="IPR013852">
    <property type="entry name" value="Transl_elong_P/YeiP_CS"/>
</dbReference>
<dbReference type="InterPro" id="IPR011768">
    <property type="entry name" value="Transl_elongation_fac_P"/>
</dbReference>
<dbReference type="InterPro" id="IPR008991">
    <property type="entry name" value="Translation_prot_SH3-like_sf"/>
</dbReference>
<dbReference type="NCBIfam" id="TIGR00038">
    <property type="entry name" value="efp"/>
    <property type="match status" value="1"/>
</dbReference>
<dbReference type="NCBIfam" id="NF001810">
    <property type="entry name" value="PRK00529.1"/>
    <property type="match status" value="1"/>
</dbReference>
<dbReference type="PANTHER" id="PTHR30053">
    <property type="entry name" value="ELONGATION FACTOR P"/>
    <property type="match status" value="1"/>
</dbReference>
<dbReference type="PANTHER" id="PTHR30053:SF12">
    <property type="entry name" value="ELONGATION FACTOR P (EF-P) FAMILY PROTEIN"/>
    <property type="match status" value="1"/>
</dbReference>
<dbReference type="Pfam" id="PF01132">
    <property type="entry name" value="EFP"/>
    <property type="match status" value="1"/>
</dbReference>
<dbReference type="Pfam" id="PF08207">
    <property type="entry name" value="EFP_N"/>
    <property type="match status" value="1"/>
</dbReference>
<dbReference type="Pfam" id="PF09285">
    <property type="entry name" value="Elong-fact-P_C"/>
    <property type="match status" value="1"/>
</dbReference>
<dbReference type="PIRSF" id="PIRSF005901">
    <property type="entry name" value="EF-P"/>
    <property type="match status" value="1"/>
</dbReference>
<dbReference type="SMART" id="SM01185">
    <property type="entry name" value="EFP"/>
    <property type="match status" value="1"/>
</dbReference>
<dbReference type="SMART" id="SM00841">
    <property type="entry name" value="Elong-fact-P_C"/>
    <property type="match status" value="1"/>
</dbReference>
<dbReference type="SUPFAM" id="SSF50249">
    <property type="entry name" value="Nucleic acid-binding proteins"/>
    <property type="match status" value="2"/>
</dbReference>
<dbReference type="SUPFAM" id="SSF50104">
    <property type="entry name" value="Translation proteins SH3-like domain"/>
    <property type="match status" value="1"/>
</dbReference>
<dbReference type="PROSITE" id="PS01275">
    <property type="entry name" value="EFP"/>
    <property type="match status" value="1"/>
</dbReference>
<protein>
    <recommendedName>
        <fullName evidence="1">Elongation factor P</fullName>
        <shortName evidence="1">EF-P</shortName>
    </recommendedName>
</protein>
<keyword id="KW-0963">Cytoplasm</keyword>
<keyword id="KW-0251">Elongation factor</keyword>
<keyword id="KW-0648">Protein biosynthesis</keyword>
<evidence type="ECO:0000255" key="1">
    <source>
        <dbReference type="HAMAP-Rule" id="MF_00141"/>
    </source>
</evidence>
<proteinExistence type="inferred from homology"/>
<reference key="1">
    <citation type="journal article" date="2007" name="PLoS ONE">
        <title>Analysis of the neurotoxin complex genes in Clostridium botulinum A1-A4 and B1 strains: BoNT/A3, /Ba4 and /B1 clusters are located within plasmids.</title>
        <authorList>
            <person name="Smith T.J."/>
            <person name="Hill K.K."/>
            <person name="Foley B.T."/>
            <person name="Detter J.C."/>
            <person name="Munk A.C."/>
            <person name="Bruce D.C."/>
            <person name="Doggett N.A."/>
            <person name="Smith L.A."/>
            <person name="Marks J.D."/>
            <person name="Xie G."/>
            <person name="Brettin T.S."/>
        </authorList>
    </citation>
    <scope>NUCLEOTIDE SEQUENCE [LARGE SCALE GENOMIC DNA]</scope>
    <source>
        <strain>Okra / Type B1</strain>
    </source>
</reference>
<comment type="function">
    <text evidence="1">Involved in peptide bond synthesis. Stimulates efficient translation and peptide-bond synthesis on native or reconstituted 70S ribosomes in vitro. Probably functions indirectly by altering the affinity of the ribosome for aminoacyl-tRNA, thus increasing their reactivity as acceptors for peptidyl transferase.</text>
</comment>
<comment type="pathway">
    <text evidence="1">Protein biosynthesis; polypeptide chain elongation.</text>
</comment>
<comment type="subcellular location">
    <subcellularLocation>
        <location evidence="1">Cytoplasm</location>
    </subcellularLocation>
</comment>
<comment type="similarity">
    <text evidence="1">Belongs to the elongation factor P family.</text>
</comment>
<organism>
    <name type="scientific">Clostridium botulinum (strain Okra / Type B1)</name>
    <dbReference type="NCBI Taxonomy" id="498213"/>
    <lineage>
        <taxon>Bacteria</taxon>
        <taxon>Bacillati</taxon>
        <taxon>Bacillota</taxon>
        <taxon>Clostridia</taxon>
        <taxon>Eubacteriales</taxon>
        <taxon>Clostridiaceae</taxon>
        <taxon>Clostridium</taxon>
    </lineage>
</organism>
<accession>B1IMQ0</accession>
<gene>
    <name evidence="1" type="primary">efp</name>
    <name type="ordered locus">CLD_2740</name>
</gene>
<name>EFP_CLOBK</name>